<organism>
    <name type="scientific">Mus musculus</name>
    <name type="common">Mouse</name>
    <dbReference type="NCBI Taxonomy" id="10090"/>
    <lineage>
        <taxon>Eukaryota</taxon>
        <taxon>Metazoa</taxon>
        <taxon>Chordata</taxon>
        <taxon>Craniata</taxon>
        <taxon>Vertebrata</taxon>
        <taxon>Euteleostomi</taxon>
        <taxon>Mammalia</taxon>
        <taxon>Eutheria</taxon>
        <taxon>Euarchontoglires</taxon>
        <taxon>Glires</taxon>
        <taxon>Rodentia</taxon>
        <taxon>Myomorpha</taxon>
        <taxon>Muroidea</taxon>
        <taxon>Muridae</taxon>
        <taxon>Murinae</taxon>
        <taxon>Mus</taxon>
        <taxon>Mus</taxon>
    </lineage>
</organism>
<comment type="function">
    <text evidence="1">Transcription factor which plays a key role in the Hippo signaling pathway, a pathway involved in organ size control and tumor suppression by restricting proliferation and promoting apoptosis. The core of this pathway is composed of a kinase cascade wherein MST1/MST2, in complex with its regulatory protein SAV1, phosphorylates and activates LATS1/2 in complex with its regulatory protein MOB1, which in turn phosphorylates and inactivates YAP1 oncoprotein and WWTR1/TAZ. Acts by mediating gene expression of YAP1 and WWTR1/TAZ, thereby regulating cell proliferation, migration and epithelial mesenchymal transition (EMT) induction (By similarity). Binds to the SPH and GT-IIC 'enhansons' (5'-GTGGAATGT-3'). May be involved in the gene regulation of neural development. Binds to the M-CAT motif.</text>
</comment>
<comment type="subunit">
    <text evidence="1">Interacts with YAP1 and WWTR1/TAZ.</text>
</comment>
<comment type="subcellular location">
    <subcellularLocation>
        <location>Nucleus</location>
    </subcellularLocation>
</comment>
<comment type="tissue specificity">
    <text>Highest expression in brain. High levels also found in lung, testis and ovarian follicle cells. Lower levels in heart and spleen.</text>
</comment>
<comment type="developmental stage">
    <text>In the embryo, levels fall after fertilization until the 2-4 cell stage and then increase rapidly.</text>
</comment>
<evidence type="ECO:0000250" key="1"/>
<evidence type="ECO:0000255" key="2"/>
<evidence type="ECO:0000255" key="3">
    <source>
        <dbReference type="PROSITE-ProRule" id="PRU00505"/>
    </source>
</evidence>
<evidence type="ECO:0000256" key="4">
    <source>
        <dbReference type="SAM" id="MobiDB-lite"/>
    </source>
</evidence>
<evidence type="ECO:0000305" key="5"/>
<protein>
    <recommendedName>
        <fullName>Transcriptional enhancer factor TEF-4</fullName>
    </recommendedName>
    <alternativeName>
        <fullName>ETEF-1</fullName>
    </alternativeName>
    <alternativeName>
        <fullName>Embryonic TEA domain-containing factor</fullName>
        <shortName>ETF</shortName>
    </alternativeName>
    <alternativeName>
        <fullName>TEA domain family member 2</fullName>
        <shortName>TEAD-2</shortName>
    </alternativeName>
</protein>
<feature type="chain" id="PRO_0000205933" description="Transcriptional enhancer factor TEF-4">
    <location>
        <begin position="1"/>
        <end position="445"/>
    </location>
</feature>
<feature type="DNA-binding region" description="TEA" evidence="3">
    <location>
        <begin position="38"/>
        <end position="114"/>
    </location>
</feature>
<feature type="region of interest" description="Disordered" evidence="4">
    <location>
        <begin position="1"/>
        <end position="47"/>
    </location>
</feature>
<feature type="region of interest" description="Transcriptional activation" evidence="2">
    <location>
        <begin position="172"/>
        <end position="445"/>
    </location>
</feature>
<feature type="region of interest" description="Disordered" evidence="4">
    <location>
        <begin position="191"/>
        <end position="217"/>
    </location>
</feature>
<feature type="compositionally biased region" description="Gly residues" evidence="4">
    <location>
        <begin position="25"/>
        <end position="37"/>
    </location>
</feature>
<feature type="compositionally biased region" description="Pro residues" evidence="4">
    <location>
        <begin position="199"/>
        <end position="216"/>
    </location>
</feature>
<feature type="sequence conflict" description="In Ref. 3; CAA64216." evidence="5" ref="3">
    <original>Y</original>
    <variation>F</variation>
    <location>
        <position position="289"/>
    </location>
</feature>
<name>TEAD2_MOUSE</name>
<keyword id="KW-0010">Activator</keyword>
<keyword id="KW-0238">DNA-binding</keyword>
<keyword id="KW-0539">Nucleus</keyword>
<keyword id="KW-1185">Reference proteome</keyword>
<keyword id="KW-0804">Transcription</keyword>
<keyword id="KW-0805">Transcription regulation</keyword>
<proteinExistence type="evidence at transcript level"/>
<reference key="1">
    <citation type="journal article" date="1995" name="J. Biol. Chem.">
        <title>Molecular characterization of cDNA encoding a novel protein related to transcriptional enhancer factor-1 from neural precursor cells.</title>
        <authorList>
            <person name="Yasunami M."/>
            <person name="Suzuki K."/>
            <person name="Houtani T."/>
            <person name="Sugimoto T."/>
            <person name="Ohkubo H."/>
        </authorList>
    </citation>
    <scope>NUCLEOTIDE SEQUENCE [MRNA]</scope>
    <source>
        <strain>ICR</strain>
        <tissue>Head</tissue>
    </source>
</reference>
<reference key="2">
    <citation type="journal article" date="1996" name="Genomics">
        <title>Structural organization and chromosomal assignment of the mouse embryonic TEA domain-containing factor (ETF) gene.</title>
        <authorList>
            <person name="Suzuki K."/>
            <person name="Yasunami M."/>
            <person name="Matsuda Y."/>
            <person name="Maeda T."/>
            <person name="Kobayashi H."/>
            <person name="Terasaki H."/>
            <person name="Ohkubo H."/>
        </authorList>
    </citation>
    <scope>NUCLEOTIDE SEQUENCE [GENOMIC DNA]</scope>
    <source>
        <strain>C57BL/6J</strain>
    </source>
</reference>
<reference key="3">
    <citation type="journal article" date="1996" name="J. Biol. Chem.">
        <title>A novel family of developmentally regulated mammalian transcription factors containing the TEA/ATTS DNA binding domain.</title>
        <authorList>
            <person name="Jacquemin P."/>
            <person name="Hwang J.-J."/>
            <person name="Martial J.A."/>
            <person name="Dolle P."/>
            <person name="Davidson I."/>
        </authorList>
    </citation>
    <scope>NUCLEOTIDE SEQUENCE [MRNA]</scope>
</reference>
<reference key="4">
    <citation type="journal article" date="1997" name="Development">
        <title>Transcription factor mTEAD-2 is selectively expressed at the beginning of zygotic gene expression in the mouse.</title>
        <authorList>
            <person name="Kaneko K.J."/>
            <person name="Cullinan E.B."/>
            <person name="Latham K.E."/>
            <person name="Depamphilis M.L."/>
        </authorList>
    </citation>
    <scope>NUCLEOTIDE SEQUENCE [MRNA]</scope>
    <source>
        <tissue>Carcinoma</tissue>
    </source>
</reference>
<dbReference type="EMBL" id="D50563">
    <property type="protein sequence ID" value="BAA09126.1"/>
    <property type="molecule type" value="mRNA"/>
</dbReference>
<dbReference type="EMBL" id="D83596">
    <property type="protein sequence ID" value="BAA12018.1"/>
    <property type="molecule type" value="Genomic_DNA"/>
</dbReference>
<dbReference type="EMBL" id="X94442">
    <property type="protein sequence ID" value="CAA64216.1"/>
    <property type="molecule type" value="mRNA"/>
</dbReference>
<dbReference type="EMBL" id="Y10026">
    <property type="protein sequence ID" value="CAA71135.1"/>
    <property type="molecule type" value="mRNA"/>
</dbReference>
<dbReference type="CCDS" id="CCDS21236.1"/>
<dbReference type="PIR" id="A57400">
    <property type="entry name" value="A57400"/>
</dbReference>
<dbReference type="RefSeq" id="NP_001272427.1">
    <property type="nucleotide sequence ID" value="NM_001285498.2"/>
</dbReference>
<dbReference type="RefSeq" id="NP_001366201.1">
    <property type="nucleotide sequence ID" value="NM_001379272.1"/>
</dbReference>
<dbReference type="RefSeq" id="NP_001366202.1">
    <property type="nucleotide sequence ID" value="NM_001379273.1"/>
</dbReference>
<dbReference type="RefSeq" id="NP_035695.1">
    <property type="nucleotide sequence ID" value="NM_011565.3"/>
</dbReference>
<dbReference type="RefSeq" id="XP_006540840.1">
    <property type="nucleotide sequence ID" value="XM_006540777.2"/>
</dbReference>
<dbReference type="SMR" id="P48301"/>
<dbReference type="BioGRID" id="204099">
    <property type="interactions" value="3"/>
</dbReference>
<dbReference type="CORUM" id="P48301"/>
<dbReference type="FunCoup" id="P48301">
    <property type="interactions" value="649"/>
</dbReference>
<dbReference type="IntAct" id="P48301">
    <property type="interactions" value="1"/>
</dbReference>
<dbReference type="STRING" id="10090.ENSMUSP00000103431"/>
<dbReference type="iPTMnet" id="P48301"/>
<dbReference type="PhosphoSitePlus" id="P48301"/>
<dbReference type="PaxDb" id="10090-ENSMUSP00000103431"/>
<dbReference type="ProteomicsDB" id="259369"/>
<dbReference type="Antibodypedia" id="31984">
    <property type="antibodies" value="261 antibodies from 32 providers"/>
</dbReference>
<dbReference type="DNASU" id="21677"/>
<dbReference type="Ensembl" id="ENSMUST00000033060.14">
    <property type="protein sequence ID" value="ENSMUSP00000033060.7"/>
    <property type="gene ID" value="ENSMUSG00000030796.18"/>
</dbReference>
<dbReference type="Ensembl" id="ENSMUST00000107801.10">
    <property type="protein sequence ID" value="ENSMUSP00000103431.2"/>
    <property type="gene ID" value="ENSMUSG00000030796.18"/>
</dbReference>
<dbReference type="GeneID" id="21677"/>
<dbReference type="KEGG" id="mmu:21677"/>
<dbReference type="UCSC" id="uc009gud.1">
    <property type="organism name" value="mouse"/>
</dbReference>
<dbReference type="AGR" id="MGI:104904"/>
<dbReference type="CTD" id="8463"/>
<dbReference type="MGI" id="MGI:104904">
    <property type="gene designation" value="Tead2"/>
</dbReference>
<dbReference type="VEuPathDB" id="HostDB:ENSMUSG00000030796"/>
<dbReference type="eggNOG" id="KOG3841">
    <property type="taxonomic scope" value="Eukaryota"/>
</dbReference>
<dbReference type="GeneTree" id="ENSGT00950000182956"/>
<dbReference type="HOGENOM" id="CLU_012515_2_0_1"/>
<dbReference type="InParanoid" id="P48301"/>
<dbReference type="OMA" id="IFQFWSG"/>
<dbReference type="OrthoDB" id="10006572at2759"/>
<dbReference type="PhylomeDB" id="P48301"/>
<dbReference type="TreeFam" id="TF313443"/>
<dbReference type="Reactome" id="R-MMU-2032785">
    <property type="pathway name" value="YAP1- and WWTR1 (TAZ)-stimulated gene expression"/>
</dbReference>
<dbReference type="Reactome" id="R-MMU-8951671">
    <property type="pathway name" value="RUNX3 regulates YAP1-mediated transcription"/>
</dbReference>
<dbReference type="BioGRID-ORCS" id="21677">
    <property type="hits" value="6 hits in 79 CRISPR screens"/>
</dbReference>
<dbReference type="ChiTaRS" id="Tead2">
    <property type="organism name" value="mouse"/>
</dbReference>
<dbReference type="PRO" id="PR:P48301"/>
<dbReference type="Proteomes" id="UP000000589">
    <property type="component" value="Chromosome 7"/>
</dbReference>
<dbReference type="RNAct" id="P48301">
    <property type="molecule type" value="protein"/>
</dbReference>
<dbReference type="Bgee" id="ENSMUSG00000030796">
    <property type="expression patterns" value="Expressed in ventricular zone and 201 other cell types or tissues"/>
</dbReference>
<dbReference type="ExpressionAtlas" id="P48301">
    <property type="expression patterns" value="baseline and differential"/>
</dbReference>
<dbReference type="GO" id="GO:0005829">
    <property type="term" value="C:cytosol"/>
    <property type="evidence" value="ECO:0007669"/>
    <property type="project" value="Ensembl"/>
</dbReference>
<dbReference type="GO" id="GO:0005654">
    <property type="term" value="C:nucleoplasm"/>
    <property type="evidence" value="ECO:0000304"/>
    <property type="project" value="Reactome"/>
</dbReference>
<dbReference type="GO" id="GO:0140552">
    <property type="term" value="C:TEAD-YAP complex"/>
    <property type="evidence" value="ECO:0007669"/>
    <property type="project" value="Ensembl"/>
</dbReference>
<dbReference type="GO" id="GO:0005667">
    <property type="term" value="C:transcription regulator complex"/>
    <property type="evidence" value="ECO:0000314"/>
    <property type="project" value="MGI"/>
</dbReference>
<dbReference type="GO" id="GO:0097718">
    <property type="term" value="F:disordered domain specific binding"/>
    <property type="evidence" value="ECO:0007669"/>
    <property type="project" value="Ensembl"/>
</dbReference>
<dbReference type="GO" id="GO:0003677">
    <property type="term" value="F:DNA binding"/>
    <property type="evidence" value="ECO:0000314"/>
    <property type="project" value="MGI"/>
</dbReference>
<dbReference type="GO" id="GO:0000981">
    <property type="term" value="F:DNA-binding transcription factor activity, RNA polymerase II-specific"/>
    <property type="evidence" value="ECO:0000314"/>
    <property type="project" value="MGI"/>
</dbReference>
<dbReference type="GO" id="GO:0000978">
    <property type="term" value="F:RNA polymerase II cis-regulatory region sequence-specific DNA binding"/>
    <property type="evidence" value="ECO:0000314"/>
    <property type="project" value="MGI"/>
</dbReference>
<dbReference type="GO" id="GO:0001223">
    <property type="term" value="F:transcription coactivator binding"/>
    <property type="evidence" value="ECO:0007669"/>
    <property type="project" value="Ensembl"/>
</dbReference>
<dbReference type="GO" id="GO:0071300">
    <property type="term" value="P:cellular response to retinoic acid"/>
    <property type="evidence" value="ECO:0000314"/>
    <property type="project" value="MGI"/>
</dbReference>
<dbReference type="GO" id="GO:0003143">
    <property type="term" value="P:embryonic heart tube morphogenesis"/>
    <property type="evidence" value="ECO:0000316"/>
    <property type="project" value="MGI"/>
</dbReference>
<dbReference type="GO" id="GO:0035329">
    <property type="term" value="P:hippo signaling"/>
    <property type="evidence" value="ECO:0007669"/>
    <property type="project" value="Ensembl"/>
</dbReference>
<dbReference type="GO" id="GO:0048368">
    <property type="term" value="P:lateral mesoderm development"/>
    <property type="evidence" value="ECO:0000316"/>
    <property type="project" value="MGI"/>
</dbReference>
<dbReference type="GO" id="GO:0060485">
    <property type="term" value="P:mesenchyme development"/>
    <property type="evidence" value="ECO:0000316"/>
    <property type="project" value="UniProtKB"/>
</dbReference>
<dbReference type="GO" id="GO:0007399">
    <property type="term" value="P:nervous system development"/>
    <property type="evidence" value="ECO:0000316"/>
    <property type="project" value="UniProtKB"/>
</dbReference>
<dbReference type="GO" id="GO:0001843">
    <property type="term" value="P:neural tube closure"/>
    <property type="evidence" value="ECO:0000315"/>
    <property type="project" value="MGI"/>
</dbReference>
<dbReference type="GO" id="GO:0030903">
    <property type="term" value="P:notochord development"/>
    <property type="evidence" value="ECO:0000316"/>
    <property type="project" value="MGI"/>
</dbReference>
<dbReference type="GO" id="GO:0048339">
    <property type="term" value="P:paraxial mesoderm development"/>
    <property type="evidence" value="ECO:0000316"/>
    <property type="project" value="MGI"/>
</dbReference>
<dbReference type="GO" id="GO:0045944">
    <property type="term" value="P:positive regulation of transcription by RNA polymerase II"/>
    <property type="evidence" value="ECO:0000314"/>
    <property type="project" value="MGI"/>
</dbReference>
<dbReference type="GO" id="GO:0065003">
    <property type="term" value="P:protein-containing complex assembly"/>
    <property type="evidence" value="ECO:0007669"/>
    <property type="project" value="Ensembl"/>
</dbReference>
<dbReference type="GO" id="GO:2000736">
    <property type="term" value="P:regulation of stem cell differentiation"/>
    <property type="evidence" value="ECO:0000315"/>
    <property type="project" value="MGI"/>
</dbReference>
<dbReference type="GO" id="GO:0006366">
    <property type="term" value="P:transcription by RNA polymerase II"/>
    <property type="evidence" value="ECO:0000314"/>
    <property type="project" value="MGI"/>
</dbReference>
<dbReference type="GO" id="GO:0001570">
    <property type="term" value="P:vasculogenesis"/>
    <property type="evidence" value="ECO:0000316"/>
    <property type="project" value="MGI"/>
</dbReference>
<dbReference type="FunFam" id="2.70.50.80:FF:000002">
    <property type="entry name" value="transcriptional enhancer factor TEF-4 isoform X1"/>
    <property type="match status" value="1"/>
</dbReference>
<dbReference type="Gene3D" id="2.70.50.80">
    <property type="match status" value="1"/>
</dbReference>
<dbReference type="Gene3D" id="6.10.20.40">
    <property type="entry name" value="TEA/ATTS domain"/>
    <property type="match status" value="1"/>
</dbReference>
<dbReference type="InterPro" id="IPR000818">
    <property type="entry name" value="TEA/ATTS_dom"/>
</dbReference>
<dbReference type="InterPro" id="IPR038096">
    <property type="entry name" value="TEA/ATTS_sf"/>
</dbReference>
<dbReference type="InterPro" id="IPR050937">
    <property type="entry name" value="TEC1_TEAD_TF"/>
</dbReference>
<dbReference type="InterPro" id="IPR016361">
    <property type="entry name" value="TEF_metazoa"/>
</dbReference>
<dbReference type="InterPro" id="IPR041086">
    <property type="entry name" value="YBD"/>
</dbReference>
<dbReference type="PANTHER" id="PTHR11834">
    <property type="entry name" value="TRANSCRIPTIONAL ENHANCER FACTOR TEF RELATED"/>
    <property type="match status" value="1"/>
</dbReference>
<dbReference type="PANTHER" id="PTHR11834:SF5">
    <property type="entry name" value="TRANSCRIPTIONAL ENHANCER FACTOR TEF-4"/>
    <property type="match status" value="1"/>
</dbReference>
<dbReference type="Pfam" id="PF01285">
    <property type="entry name" value="TEA"/>
    <property type="match status" value="1"/>
</dbReference>
<dbReference type="Pfam" id="PF17725">
    <property type="entry name" value="YBD"/>
    <property type="match status" value="1"/>
</dbReference>
<dbReference type="PIRSF" id="PIRSF002603">
    <property type="entry name" value="TEF"/>
    <property type="match status" value="1"/>
</dbReference>
<dbReference type="PRINTS" id="PR00065">
    <property type="entry name" value="TEADOMAIN"/>
</dbReference>
<dbReference type="SMART" id="SM00426">
    <property type="entry name" value="TEA"/>
    <property type="match status" value="1"/>
</dbReference>
<dbReference type="PROSITE" id="PS00554">
    <property type="entry name" value="TEA_1"/>
    <property type="match status" value="1"/>
</dbReference>
<dbReference type="PROSITE" id="PS51088">
    <property type="entry name" value="TEA_2"/>
    <property type="match status" value="1"/>
</dbReference>
<accession>P48301</accession>
<accession>Q62297</accession>
<sequence>MGDPRTGAPLDDGGGWTGSEEGSEEGTGGSEGVGGDGSPDAEGVWSPDIEQSFQEALAIYPPCGRRKIILSDEGKMYGRNELIARYIKLRTGKTRTRKQVSSHIQVLARRKSREIQSKLKDQVSKDKAFQTMATMSSAQLISAPSLQAKLGPSGPQATELFQFWSGSSGPPWNVPDVKPFSQAPFSVSLTPPASDLPGYEPPPALSPLPPPAPSPPAWQARALGTARLQLIEFSAFVEPPDAVDSFQRHLFVHISQQCPSPGAPPLESVDVRQIYDKFPEKKGGLRELYDRGPPHAFFLVKFWADLNWGPSAEEAGSSGGGGGFYGVSSQYESRELMTLTCSSKVCSFGKQVVEKVETERAQLEDGRFVYRLLRSPMCEYLVNFLHKLRQLPERYMMNSVLENFTILQVVTNRDTQELLLCTAYVFEVSTSERGAQYHIYRLVRD</sequence>
<gene>
    <name type="primary">Tead2</name>
    <name type="synonym">Etdf</name>
    <name type="synonym">Etf</name>
    <name type="synonym">Tef4</name>
</gene>